<evidence type="ECO:0000250" key="1">
    <source>
        <dbReference type="UniProtKB" id="Q8CDL9"/>
    </source>
</evidence>
<evidence type="ECO:0000255" key="2"/>
<evidence type="ECO:0000269" key="3">
    <source>
    </source>
</evidence>
<evidence type="ECO:0000305" key="4"/>
<reference key="1">
    <citation type="journal article" date="2004" name="Nat. Genet.">
        <title>Complete sequencing and characterization of 21,243 full-length human cDNAs.</title>
        <authorList>
            <person name="Ota T."/>
            <person name="Suzuki Y."/>
            <person name="Nishikawa T."/>
            <person name="Otsuki T."/>
            <person name="Sugiyama T."/>
            <person name="Irie R."/>
            <person name="Wakamatsu A."/>
            <person name="Hayashi K."/>
            <person name="Sato H."/>
            <person name="Nagai K."/>
            <person name="Kimura K."/>
            <person name="Makita H."/>
            <person name="Sekine M."/>
            <person name="Obayashi M."/>
            <person name="Nishi T."/>
            <person name="Shibahara T."/>
            <person name="Tanaka T."/>
            <person name="Ishii S."/>
            <person name="Yamamoto J."/>
            <person name="Saito K."/>
            <person name="Kawai Y."/>
            <person name="Isono Y."/>
            <person name="Nakamura Y."/>
            <person name="Nagahari K."/>
            <person name="Murakami K."/>
            <person name="Yasuda T."/>
            <person name="Iwayanagi T."/>
            <person name="Wagatsuma M."/>
            <person name="Shiratori A."/>
            <person name="Sudo H."/>
            <person name="Hosoiri T."/>
            <person name="Kaku Y."/>
            <person name="Kodaira H."/>
            <person name="Kondo H."/>
            <person name="Sugawara M."/>
            <person name="Takahashi M."/>
            <person name="Kanda K."/>
            <person name="Yokoi T."/>
            <person name="Furuya T."/>
            <person name="Kikkawa E."/>
            <person name="Omura Y."/>
            <person name="Abe K."/>
            <person name="Kamihara K."/>
            <person name="Katsuta N."/>
            <person name="Sato K."/>
            <person name="Tanikawa M."/>
            <person name="Yamazaki M."/>
            <person name="Ninomiya K."/>
            <person name="Ishibashi T."/>
            <person name="Yamashita H."/>
            <person name="Murakawa K."/>
            <person name="Fujimori K."/>
            <person name="Tanai H."/>
            <person name="Kimata M."/>
            <person name="Watanabe M."/>
            <person name="Hiraoka S."/>
            <person name="Chiba Y."/>
            <person name="Ishida S."/>
            <person name="Ono Y."/>
            <person name="Takiguchi S."/>
            <person name="Watanabe S."/>
            <person name="Yosida M."/>
            <person name="Hotuta T."/>
            <person name="Kusano J."/>
            <person name="Kanehori K."/>
            <person name="Takahashi-Fujii A."/>
            <person name="Hara H."/>
            <person name="Tanase T.-O."/>
            <person name="Nomura Y."/>
            <person name="Togiya S."/>
            <person name="Komai F."/>
            <person name="Hara R."/>
            <person name="Takeuchi K."/>
            <person name="Arita M."/>
            <person name="Imose N."/>
            <person name="Musashino K."/>
            <person name="Yuuki H."/>
            <person name="Oshima A."/>
            <person name="Sasaki N."/>
            <person name="Aotsuka S."/>
            <person name="Yoshikawa Y."/>
            <person name="Matsunawa H."/>
            <person name="Ichihara T."/>
            <person name="Shiohata N."/>
            <person name="Sano S."/>
            <person name="Moriya S."/>
            <person name="Momiyama H."/>
            <person name="Satoh N."/>
            <person name="Takami S."/>
            <person name="Terashima Y."/>
            <person name="Suzuki O."/>
            <person name="Nakagawa S."/>
            <person name="Senoh A."/>
            <person name="Mizoguchi H."/>
            <person name="Goto Y."/>
            <person name="Shimizu F."/>
            <person name="Wakebe H."/>
            <person name="Hishigaki H."/>
            <person name="Watanabe T."/>
            <person name="Sugiyama A."/>
            <person name="Takemoto M."/>
            <person name="Kawakami B."/>
            <person name="Yamazaki M."/>
            <person name="Watanabe K."/>
            <person name="Kumagai A."/>
            <person name="Itakura S."/>
            <person name="Fukuzumi Y."/>
            <person name="Fujimori Y."/>
            <person name="Komiyama M."/>
            <person name="Tashiro H."/>
            <person name="Tanigami A."/>
            <person name="Fujiwara T."/>
            <person name="Ono T."/>
            <person name="Yamada K."/>
            <person name="Fujii Y."/>
            <person name="Ozaki K."/>
            <person name="Hirao M."/>
            <person name="Ohmori Y."/>
            <person name="Kawabata A."/>
            <person name="Hikiji T."/>
            <person name="Kobatake N."/>
            <person name="Inagaki H."/>
            <person name="Ikema Y."/>
            <person name="Okamoto S."/>
            <person name="Okitani R."/>
            <person name="Kawakami T."/>
            <person name="Noguchi S."/>
            <person name="Itoh T."/>
            <person name="Shigeta K."/>
            <person name="Senba T."/>
            <person name="Matsumura K."/>
            <person name="Nakajima Y."/>
            <person name="Mizuno T."/>
            <person name="Morinaga M."/>
            <person name="Sasaki M."/>
            <person name="Togashi T."/>
            <person name="Oyama M."/>
            <person name="Hata H."/>
            <person name="Watanabe M."/>
            <person name="Komatsu T."/>
            <person name="Mizushima-Sugano J."/>
            <person name="Satoh T."/>
            <person name="Shirai Y."/>
            <person name="Takahashi Y."/>
            <person name="Nakagawa K."/>
            <person name="Okumura K."/>
            <person name="Nagase T."/>
            <person name="Nomura N."/>
            <person name="Kikuchi H."/>
            <person name="Masuho Y."/>
            <person name="Yamashita R."/>
            <person name="Nakai K."/>
            <person name="Yada T."/>
            <person name="Nakamura Y."/>
            <person name="Ohara O."/>
            <person name="Isogai T."/>
            <person name="Sugano S."/>
        </authorList>
    </citation>
    <scope>NUCLEOTIDE SEQUENCE [LARGE SCALE MRNA]</scope>
</reference>
<reference key="2">
    <citation type="journal article" date="2006" name="Nature">
        <title>Human chromosome 11 DNA sequence and analysis including novel gene identification.</title>
        <authorList>
            <person name="Taylor T.D."/>
            <person name="Noguchi H."/>
            <person name="Totoki Y."/>
            <person name="Toyoda A."/>
            <person name="Kuroki Y."/>
            <person name="Dewar K."/>
            <person name="Lloyd C."/>
            <person name="Itoh T."/>
            <person name="Takeda T."/>
            <person name="Kim D.-W."/>
            <person name="She X."/>
            <person name="Barlow K.F."/>
            <person name="Bloom T."/>
            <person name="Bruford E."/>
            <person name="Chang J.L."/>
            <person name="Cuomo C.A."/>
            <person name="Eichler E."/>
            <person name="FitzGerald M.G."/>
            <person name="Jaffe D.B."/>
            <person name="LaButti K."/>
            <person name="Nicol R."/>
            <person name="Park H.-S."/>
            <person name="Seaman C."/>
            <person name="Sougnez C."/>
            <person name="Yang X."/>
            <person name="Zimmer A.R."/>
            <person name="Zody M.C."/>
            <person name="Birren B.W."/>
            <person name="Nusbaum C."/>
            <person name="Fujiyama A."/>
            <person name="Hattori M."/>
            <person name="Rogers J."/>
            <person name="Lander E.S."/>
            <person name="Sakaki Y."/>
        </authorList>
    </citation>
    <scope>NUCLEOTIDE SEQUENCE [LARGE SCALE GENOMIC DNA]</scope>
</reference>
<reference key="3">
    <citation type="journal article" date="2004" name="Genome Res.">
        <title>The status, quality, and expansion of the NIH full-length cDNA project: the Mammalian Gene Collection (MGC).</title>
        <authorList>
            <consortium name="The MGC Project Team"/>
        </authorList>
    </citation>
    <scope>NUCLEOTIDE SEQUENCE [LARGE SCALE MRNA]</scope>
    <scope>VARIANT LEU-217</scope>
    <source>
        <tissue>Testis</tissue>
    </source>
</reference>
<name>CCD87_HUMAN</name>
<organism>
    <name type="scientific">Homo sapiens</name>
    <name type="common">Human</name>
    <dbReference type="NCBI Taxonomy" id="9606"/>
    <lineage>
        <taxon>Eukaryota</taxon>
        <taxon>Metazoa</taxon>
        <taxon>Chordata</taxon>
        <taxon>Craniata</taxon>
        <taxon>Vertebrata</taxon>
        <taxon>Euteleostomi</taxon>
        <taxon>Mammalia</taxon>
        <taxon>Eutheria</taxon>
        <taxon>Euarchontoglires</taxon>
        <taxon>Primates</taxon>
        <taxon>Haplorrhini</taxon>
        <taxon>Catarrhini</taxon>
        <taxon>Hominidae</taxon>
        <taxon>Homo</taxon>
    </lineage>
</organism>
<keyword id="KW-0175">Coiled coil</keyword>
<keyword id="KW-0221">Differentiation</keyword>
<keyword id="KW-0278">Fertilization</keyword>
<keyword id="KW-1267">Proteomics identification</keyword>
<keyword id="KW-1185">Reference proteome</keyword>
<keyword id="KW-0744">Spermatogenesis</keyword>
<gene>
    <name type="primary">CCDC87</name>
</gene>
<sequence length="849" mass="96402">MMEPPKPEPELQRFYHRLLRPLSLFPTRTTSPEPQKRPPQEGRILQSFPLAKLTVASLCSQVAKLLAGSGIAAGVPPEARLRLIKVILDELKCSWREPPAELSLSHKNNQKLRKRLEAYVLLSSEQLFLRYLHLLVTMSTPRGVFTESATLTRLAASLARDCTLFLTSPNVYRGLLADFQALLRAEQASGDVDKLHPVCPAGTFKLCPIPWPHSTGFAQVQCSNLNLNYLIQLSRPPEFLNEPGRMDPVKELKSIPRLKRKKPFHWLPSIGKKREIDISSSQMVSLPSYPVAPTSRASPSPFCPELRRGQSMPSLREGWRLADELGLPPLPSRPLTPLVLATESKPELTGLIVAEDLKQLIKKMKLEGTRYPPLDSGLPPLLGVVTRHPAAGHRLEELEKMLRNLQEEEASGQWDPQPPKSFPLHPQPVTITLKLRNEVVVQAAAVRVSDRNFLDSFHIEGAGALYNHLAGELDPKAIEKMDIDNFVGSTTREVYKELMSHVSSDHLHFDQGPLVEPAADKDWSTFLSSAFLRQEKQPQIINPELVGLYSQRANTLQSNTKKMPSLPSLQATKSWEKWSNKASLMNSWKTTLSVDDYFKYLTNHETDFLHVIFQMHEEEVPVEIVAPARESLEIQHPPPLLEDEEPDFVPGEWDWNTVLEHRLGAGKTPHLGEPHKILSLQKHLEQLWSVLEVPDKDQVDMTIKYSSKARLRQLPSLVNAWERALKPIQLREALLARLEWFEGQASNPNRFFKKTNLSSSHFLEENQVRSHLHRKLNLMESSLVSLLEEIELIFGEPVIFKGRPYLDKMKSDKVEMLYWLQQQRRVRHLVSALKDPHQSTLFRSSAASL</sequence>
<accession>Q9NVE4</accession>
<accession>Q8NE76</accession>
<protein>
    <recommendedName>
        <fullName>Coiled-coil domain-containing protein 87</fullName>
    </recommendedName>
</protein>
<proteinExistence type="evidence at protein level"/>
<dbReference type="EMBL" id="AK001648">
    <property type="protein sequence ID" value="BAA91808.1"/>
    <property type="molecule type" value="mRNA"/>
</dbReference>
<dbReference type="EMBL" id="AP001157">
    <property type="status" value="NOT_ANNOTATED_CDS"/>
    <property type="molecule type" value="Genomic_DNA"/>
</dbReference>
<dbReference type="EMBL" id="BC034469">
    <property type="protein sequence ID" value="AAH34469.1"/>
    <property type="molecule type" value="mRNA"/>
</dbReference>
<dbReference type="CCDS" id="CCDS8145.1"/>
<dbReference type="RefSeq" id="NP_060689.2">
    <property type="nucleotide sequence ID" value="NM_018219.3"/>
</dbReference>
<dbReference type="BioGRID" id="120526">
    <property type="interactions" value="22"/>
</dbReference>
<dbReference type="FunCoup" id="Q9NVE4">
    <property type="interactions" value="45"/>
</dbReference>
<dbReference type="IntAct" id="Q9NVE4">
    <property type="interactions" value="12"/>
</dbReference>
<dbReference type="STRING" id="9606.ENSP00000328487"/>
<dbReference type="GlyGen" id="Q9NVE4">
    <property type="glycosylation" value="1 site, 1 O-linked glycan (1 site)"/>
</dbReference>
<dbReference type="iPTMnet" id="Q9NVE4"/>
<dbReference type="PhosphoSitePlus" id="Q9NVE4"/>
<dbReference type="BioMuta" id="CCDC87"/>
<dbReference type="DMDM" id="296434428"/>
<dbReference type="jPOST" id="Q9NVE4"/>
<dbReference type="MassIVE" id="Q9NVE4"/>
<dbReference type="PaxDb" id="9606-ENSP00000328487"/>
<dbReference type="PeptideAtlas" id="Q9NVE4"/>
<dbReference type="ProteomicsDB" id="82784"/>
<dbReference type="Pumba" id="Q9NVE4"/>
<dbReference type="Antibodypedia" id="44485">
    <property type="antibodies" value="93 antibodies from 15 providers"/>
</dbReference>
<dbReference type="DNASU" id="55231"/>
<dbReference type="Ensembl" id="ENST00000333861.5">
    <property type="protein sequence ID" value="ENSP00000328487.3"/>
    <property type="gene ID" value="ENSG00000182791.5"/>
</dbReference>
<dbReference type="GeneID" id="55231"/>
<dbReference type="KEGG" id="hsa:55231"/>
<dbReference type="MANE-Select" id="ENST00000333861.5">
    <property type="protein sequence ID" value="ENSP00000328487.3"/>
    <property type="RefSeq nucleotide sequence ID" value="NM_018219.3"/>
    <property type="RefSeq protein sequence ID" value="NP_060689.2"/>
</dbReference>
<dbReference type="UCSC" id="uc001oiq.5">
    <property type="organism name" value="human"/>
</dbReference>
<dbReference type="AGR" id="HGNC:25579"/>
<dbReference type="CTD" id="55231"/>
<dbReference type="GeneCards" id="CCDC87"/>
<dbReference type="HGNC" id="HGNC:25579">
    <property type="gene designation" value="CCDC87"/>
</dbReference>
<dbReference type="HPA" id="ENSG00000182791">
    <property type="expression patterns" value="Tissue enriched (testis)"/>
</dbReference>
<dbReference type="neXtProt" id="NX_Q9NVE4"/>
<dbReference type="OpenTargets" id="ENSG00000182791"/>
<dbReference type="PharmGKB" id="PA144596455"/>
<dbReference type="VEuPathDB" id="HostDB:ENSG00000182791"/>
<dbReference type="eggNOG" id="ENOG502QQN1">
    <property type="taxonomic scope" value="Eukaryota"/>
</dbReference>
<dbReference type="GeneTree" id="ENSGT00390000018647"/>
<dbReference type="HOGENOM" id="CLU_016540_0_0_1"/>
<dbReference type="InParanoid" id="Q9NVE4"/>
<dbReference type="OMA" id="GEWDWNT"/>
<dbReference type="OrthoDB" id="67750at2759"/>
<dbReference type="PAN-GO" id="Q9NVE4">
    <property type="GO annotations" value="0 GO annotations based on evolutionary models"/>
</dbReference>
<dbReference type="PhylomeDB" id="Q9NVE4"/>
<dbReference type="TreeFam" id="TF353429"/>
<dbReference type="PathwayCommons" id="Q9NVE4"/>
<dbReference type="SignaLink" id="Q9NVE4"/>
<dbReference type="BioGRID-ORCS" id="55231">
    <property type="hits" value="14 hits in 1144 CRISPR screens"/>
</dbReference>
<dbReference type="GenomeRNAi" id="55231"/>
<dbReference type="Pharos" id="Q9NVE4">
    <property type="development level" value="Tdark"/>
</dbReference>
<dbReference type="PRO" id="PR:Q9NVE4"/>
<dbReference type="Proteomes" id="UP000005640">
    <property type="component" value="Chromosome 11"/>
</dbReference>
<dbReference type="RNAct" id="Q9NVE4">
    <property type="molecule type" value="protein"/>
</dbReference>
<dbReference type="Bgee" id="ENSG00000182791">
    <property type="expression patterns" value="Expressed in male germ line stem cell (sensu Vertebrata) in testis and 74 other cell types or tissues"/>
</dbReference>
<dbReference type="GO" id="GO:0030154">
    <property type="term" value="P:cell differentiation"/>
    <property type="evidence" value="ECO:0007669"/>
    <property type="project" value="UniProtKB-KW"/>
</dbReference>
<dbReference type="GO" id="GO:2000344">
    <property type="term" value="P:positive regulation of acrosome reaction"/>
    <property type="evidence" value="ECO:0000250"/>
    <property type="project" value="UniProtKB"/>
</dbReference>
<dbReference type="GO" id="GO:1905516">
    <property type="term" value="P:positive regulation of fertilization"/>
    <property type="evidence" value="ECO:0000250"/>
    <property type="project" value="UniProtKB"/>
</dbReference>
<dbReference type="GO" id="GO:0007338">
    <property type="term" value="P:single fertilization"/>
    <property type="evidence" value="ECO:0007669"/>
    <property type="project" value="UniProtKB-KW"/>
</dbReference>
<dbReference type="GO" id="GO:0007283">
    <property type="term" value="P:spermatogenesis"/>
    <property type="evidence" value="ECO:0007669"/>
    <property type="project" value="UniProtKB-KW"/>
</dbReference>
<dbReference type="FunFam" id="1.20.58.1520:FF:000003">
    <property type="entry name" value="Coiled-coil domain-containing protein 87"/>
    <property type="match status" value="1"/>
</dbReference>
<dbReference type="Gene3D" id="1.20.58.1520">
    <property type="match status" value="1"/>
</dbReference>
<dbReference type="InterPro" id="IPR037383">
    <property type="entry name" value="CCDC87"/>
</dbReference>
<dbReference type="PANTHER" id="PTHR16078">
    <property type="entry name" value="COILED-COIL DOMAIN-CONTAINING PROTEIN 87"/>
    <property type="match status" value="1"/>
</dbReference>
<dbReference type="PANTHER" id="PTHR16078:SF1">
    <property type="entry name" value="COILED-COIL DOMAIN-CONTAINING PROTEIN 87"/>
    <property type="match status" value="1"/>
</dbReference>
<dbReference type="Pfam" id="PF03999">
    <property type="entry name" value="MAP65_ASE1"/>
    <property type="match status" value="1"/>
</dbReference>
<comment type="function">
    <text evidence="1">Plays a role in spermatogenesis, where it is important for normal sperm head morphology. Also required for the acrosome reaction and thus normal male fertility.</text>
</comment>
<comment type="interaction">
    <interactant intactId="EBI-749261">
        <id>Q9NVE4</id>
    </interactant>
    <interactant intactId="EBI-1181367">
        <id>Q01850</id>
        <label>CDR2</label>
    </interactant>
    <organismsDiffer>false</organismsDiffer>
    <experiments>3</experiments>
</comment>
<comment type="interaction">
    <interactant intactId="EBI-749261">
        <id>Q9NVE4</id>
    </interactant>
    <interactant intactId="EBI-618309">
        <id>Q08379</id>
        <label>GOLGA2</label>
    </interactant>
    <organismsDiffer>false</organismsDiffer>
    <experiments>6</experiments>
</comment>
<comment type="interaction">
    <interactant intactId="EBI-749261">
        <id>Q9NVE4</id>
    </interactant>
    <interactant intactId="EBI-739566">
        <id>P19012</id>
        <label>KRT15</label>
    </interactant>
    <organismsDiffer>false</organismsDiffer>
    <experiments>3</experiments>
</comment>
<comment type="interaction">
    <interactant intactId="EBI-749261">
        <id>Q9NVE4</id>
    </interactant>
    <interactant intactId="EBI-719493">
        <id>P14373</id>
        <label>TRIM27</label>
    </interactant>
    <organismsDiffer>false</organismsDiffer>
    <experiments>3</experiments>
</comment>
<comment type="interaction">
    <interactant intactId="EBI-749261">
        <id>Q9NVE4</id>
    </interactant>
    <interactant intactId="EBI-2130429">
        <id>Q9BYV2</id>
        <label>TRIM54</label>
    </interactant>
    <organismsDiffer>false</organismsDiffer>
    <experiments>3</experiments>
</comment>
<comment type="interaction">
    <interactant intactId="EBI-749261">
        <id>Q9NVE4</id>
    </interactant>
    <interactant intactId="EBI-739895">
        <id>Q8N6Y0</id>
        <label>USHBP1</label>
    </interactant>
    <organismsDiffer>false</organismsDiffer>
    <experiments>3</experiments>
</comment>
<comment type="similarity">
    <text evidence="4">Belongs to the CCDC87 family.</text>
</comment>
<feature type="chain" id="PRO_0000295145" description="Coiled-coil domain-containing protein 87">
    <location>
        <begin position="1"/>
        <end position="849"/>
    </location>
</feature>
<feature type="coiled-coil region" evidence="2">
    <location>
        <begin position="387"/>
        <end position="415"/>
    </location>
</feature>
<feature type="sequence variant" id="VAR_056782" description="In dbSNP:rs1110707.">
    <original>A</original>
    <variation>T</variation>
    <location>
        <position position="156"/>
    </location>
</feature>
<feature type="sequence variant" id="VAR_033224" description="In dbSNP:rs17853294." evidence="3">
    <original>F</original>
    <variation>L</variation>
    <location>
        <position position="217"/>
    </location>
</feature>
<feature type="sequence conflict" description="In Ref. 1; BAA91808." evidence="4" ref="1">
    <original>L</original>
    <variation>R</variation>
    <location>
        <position position="738"/>
    </location>
</feature>
<feature type="sequence conflict" description="In Ref. 1; BAA91808." evidence="4" ref="1">
    <original>K</original>
    <variation>R</variation>
    <location>
        <position position="834"/>
    </location>
</feature>